<dbReference type="EC" id="6.3.2.32"/>
<dbReference type="EMBL" id="BX950229">
    <property type="protein sequence ID" value="CAF29726.1"/>
    <property type="molecule type" value="Genomic_DNA"/>
</dbReference>
<dbReference type="RefSeq" id="WP_011170114.1">
    <property type="nucleotide sequence ID" value="NC_005791.1"/>
</dbReference>
<dbReference type="SMR" id="Q6M0U8"/>
<dbReference type="STRING" id="267377.MMP0170"/>
<dbReference type="EnsemblBacteria" id="CAF29726">
    <property type="protein sequence ID" value="CAF29726"/>
    <property type="gene ID" value="MMP0170"/>
</dbReference>
<dbReference type="GeneID" id="2761868"/>
<dbReference type="KEGG" id="mmp:MMP0170"/>
<dbReference type="PATRIC" id="fig|267377.15.peg.174"/>
<dbReference type="eggNOG" id="arCOG01589">
    <property type="taxonomic scope" value="Archaea"/>
</dbReference>
<dbReference type="HOGENOM" id="CLU_975255_0_0_2"/>
<dbReference type="OrthoDB" id="33241at2157"/>
<dbReference type="UniPathway" id="UPA00071"/>
<dbReference type="Proteomes" id="UP000000590">
    <property type="component" value="Chromosome"/>
</dbReference>
<dbReference type="GO" id="GO:0005737">
    <property type="term" value="C:cytoplasm"/>
    <property type="evidence" value="ECO:0007669"/>
    <property type="project" value="TreeGrafter"/>
</dbReference>
<dbReference type="GO" id="GO:0005524">
    <property type="term" value="F:ATP binding"/>
    <property type="evidence" value="ECO:0007669"/>
    <property type="project" value="UniProtKB-KW"/>
</dbReference>
<dbReference type="GO" id="GO:0043774">
    <property type="term" value="F:coenzyme F420-2 alpha-glutamyl ligase activity"/>
    <property type="evidence" value="ECO:0007669"/>
    <property type="project" value="UniProtKB-EC"/>
</dbReference>
<dbReference type="GO" id="GO:0046872">
    <property type="term" value="F:metal ion binding"/>
    <property type="evidence" value="ECO:0007669"/>
    <property type="project" value="UniProtKB-KW"/>
</dbReference>
<dbReference type="GO" id="GO:0036211">
    <property type="term" value="P:protein modification process"/>
    <property type="evidence" value="ECO:0007669"/>
    <property type="project" value="InterPro"/>
</dbReference>
<dbReference type="Gene3D" id="3.30.1490.20">
    <property type="entry name" value="ATP-grasp fold, A domain"/>
    <property type="match status" value="1"/>
</dbReference>
<dbReference type="Gene3D" id="3.30.470.20">
    <property type="entry name" value="ATP-grasp fold, B domain"/>
    <property type="match status" value="1"/>
</dbReference>
<dbReference type="InterPro" id="IPR011761">
    <property type="entry name" value="ATP-grasp"/>
</dbReference>
<dbReference type="InterPro" id="IPR013651">
    <property type="entry name" value="ATP-grasp_RimK-type"/>
</dbReference>
<dbReference type="InterPro" id="IPR013815">
    <property type="entry name" value="ATP_grasp_subdomain_1"/>
</dbReference>
<dbReference type="InterPro" id="IPR031039">
    <property type="entry name" value="F420_CofF"/>
</dbReference>
<dbReference type="InterPro" id="IPR004666">
    <property type="entry name" value="Rp_bS6_RimK/Lys_biosynth_LsyX"/>
</dbReference>
<dbReference type="NCBIfam" id="TIGR04443">
    <property type="entry name" value="F420_CofF"/>
    <property type="match status" value="1"/>
</dbReference>
<dbReference type="NCBIfam" id="TIGR00768">
    <property type="entry name" value="rimK_fam"/>
    <property type="match status" value="1"/>
</dbReference>
<dbReference type="PANTHER" id="PTHR21621:SF2">
    <property type="entry name" value="COENZYME GAMMA-F420-2:ALPHA-L-GLUTAMATE LIGASE"/>
    <property type="match status" value="1"/>
</dbReference>
<dbReference type="PANTHER" id="PTHR21621">
    <property type="entry name" value="RIBOSOMAL PROTEIN S6 MODIFICATION PROTEIN"/>
    <property type="match status" value="1"/>
</dbReference>
<dbReference type="Pfam" id="PF08443">
    <property type="entry name" value="RimK"/>
    <property type="match status" value="1"/>
</dbReference>
<dbReference type="SUPFAM" id="SSF56059">
    <property type="entry name" value="Glutathione synthetase ATP-binding domain-like"/>
    <property type="match status" value="1"/>
</dbReference>
<dbReference type="PROSITE" id="PS50975">
    <property type="entry name" value="ATP_GRASP"/>
    <property type="match status" value="1"/>
</dbReference>
<feature type="chain" id="PRO_0000205499" description="Coenzyme gamma-F420-2:alpha-L-glutamate ligase">
    <location>
        <begin position="1"/>
        <end position="285"/>
    </location>
</feature>
<feature type="domain" description="ATP-grasp" evidence="2">
    <location>
        <begin position="98"/>
        <end position="284"/>
    </location>
</feature>
<feature type="binding site" evidence="1">
    <location>
        <position position="136"/>
    </location>
    <ligand>
        <name>ATP</name>
        <dbReference type="ChEBI" id="CHEBI:30616"/>
    </ligand>
</feature>
<feature type="binding site" evidence="2">
    <location>
        <begin position="170"/>
        <end position="183"/>
    </location>
    <ligand>
        <name>ATP</name>
        <dbReference type="ChEBI" id="CHEBI:30616"/>
    </ligand>
</feature>
<feature type="binding site" evidence="1">
    <location>
        <position position="199"/>
    </location>
    <ligand>
        <name>ATP</name>
        <dbReference type="ChEBI" id="CHEBI:30616"/>
    </ligand>
</feature>
<feature type="binding site" evidence="1">
    <location>
        <position position="242"/>
    </location>
    <ligand>
        <name>Mn(2+)</name>
        <dbReference type="ChEBI" id="CHEBI:29035"/>
        <label>1</label>
    </ligand>
</feature>
<feature type="binding site" evidence="1">
    <location>
        <position position="254"/>
    </location>
    <ligand>
        <name>Mn(2+)</name>
        <dbReference type="ChEBI" id="CHEBI:29035"/>
        <label>1</label>
    </ligand>
</feature>
<feature type="binding site" evidence="1">
    <location>
        <position position="254"/>
    </location>
    <ligand>
        <name>Mn(2+)</name>
        <dbReference type="ChEBI" id="CHEBI:29035"/>
        <label>2</label>
    </ligand>
</feature>
<feature type="binding site" evidence="1">
    <location>
        <position position="256"/>
    </location>
    <ligand>
        <name>Mn(2+)</name>
        <dbReference type="ChEBI" id="CHEBI:29035"/>
        <label>2</label>
    </ligand>
</feature>
<protein>
    <recommendedName>
        <fullName>Coenzyme gamma-F420-2:alpha-L-glutamate ligase</fullName>
        <ecNumber>6.3.2.32</ecNumber>
    </recommendedName>
</protein>
<keyword id="KW-0067">ATP-binding</keyword>
<keyword id="KW-0436">Ligase</keyword>
<keyword id="KW-0464">Manganese</keyword>
<keyword id="KW-0479">Metal-binding</keyword>
<keyword id="KW-0547">Nucleotide-binding</keyword>
<keyword id="KW-1185">Reference proteome</keyword>
<organism>
    <name type="scientific">Methanococcus maripaludis (strain DSM 14266 / JCM 13030 / NBRC 101832 / S2 / LL)</name>
    <dbReference type="NCBI Taxonomy" id="267377"/>
    <lineage>
        <taxon>Archaea</taxon>
        <taxon>Methanobacteriati</taxon>
        <taxon>Methanobacteriota</taxon>
        <taxon>Methanomada group</taxon>
        <taxon>Methanococci</taxon>
        <taxon>Methanococcales</taxon>
        <taxon>Methanococcaceae</taxon>
        <taxon>Methanococcus</taxon>
    </lineage>
</organism>
<reference key="1">
    <citation type="journal article" date="2004" name="J. Bacteriol.">
        <title>Complete genome sequence of the genetically tractable hydrogenotrophic methanogen Methanococcus maripaludis.</title>
        <authorList>
            <person name="Hendrickson E.L."/>
            <person name="Kaul R."/>
            <person name="Zhou Y."/>
            <person name="Bovee D."/>
            <person name="Chapman P."/>
            <person name="Chung J."/>
            <person name="Conway de Macario E."/>
            <person name="Dodsworth J.A."/>
            <person name="Gillett W."/>
            <person name="Graham D.E."/>
            <person name="Hackett M."/>
            <person name="Haydock A.K."/>
            <person name="Kang A."/>
            <person name="Land M.L."/>
            <person name="Levy R."/>
            <person name="Lie T.J."/>
            <person name="Major T.A."/>
            <person name="Moore B.C."/>
            <person name="Porat I."/>
            <person name="Palmeiri A."/>
            <person name="Rouse G."/>
            <person name="Saenphimmachak C."/>
            <person name="Soell D."/>
            <person name="Van Dien S."/>
            <person name="Wang T."/>
            <person name="Whitman W.B."/>
            <person name="Xia Q."/>
            <person name="Zhang Y."/>
            <person name="Larimer F.W."/>
            <person name="Olson M.V."/>
            <person name="Leigh J.A."/>
        </authorList>
    </citation>
    <scope>NUCLEOTIDE SEQUENCE [LARGE SCALE GENOMIC DNA]</scope>
    <source>
        <strain>DSM 14266 / JCM 13030 / NBRC 101832 / S2 / LL</strain>
    </source>
</reference>
<proteinExistence type="inferred from homology"/>
<comment type="function">
    <text evidence="1">Catalyzes the ATP-dependent addition of one alpha-linked L-glutamate molecule to coenzyme gamma-F420-2, producing coenzyme alpha-F420-3. Thus, caps the gamma-polyglutamate tail of coenzyme F420 with a terminal alpha-linked glutamate (By similarity).</text>
</comment>
<comment type="catalytic activity">
    <reaction>
        <text>oxidized coenzyme F420-2 + L-glutamate + ATP = oxidized coenzyme alpha-F420-3 + ADP + phosphate + H(+)</text>
        <dbReference type="Rhea" id="RHEA:42332"/>
        <dbReference type="ChEBI" id="CHEBI:15378"/>
        <dbReference type="ChEBI" id="CHEBI:29985"/>
        <dbReference type="ChEBI" id="CHEBI:30616"/>
        <dbReference type="ChEBI" id="CHEBI:43474"/>
        <dbReference type="ChEBI" id="CHEBI:57922"/>
        <dbReference type="ChEBI" id="CHEBI:59923"/>
        <dbReference type="ChEBI" id="CHEBI:456216"/>
        <dbReference type="EC" id="6.3.2.32"/>
    </reaction>
</comment>
<comment type="cofactor">
    <cofactor evidence="1">
        <name>Mn(2+)</name>
        <dbReference type="ChEBI" id="CHEBI:29035"/>
    </cofactor>
    <text evidence="1">Binds 2 manganese ions per subunit.</text>
</comment>
<comment type="pathway">
    <text>Cofactor biosynthesis; coenzyme F420 biosynthesis.</text>
</comment>
<comment type="subunit">
    <text evidence="1">Monomer.</text>
</comment>
<comment type="similarity">
    <text evidence="3">Belongs to the RimK family. CofF subfamily.</text>
</comment>
<sequence length="285" mass="32127">MITIACAEGGSTIYSLKKAIEDLGEKCNILLLSSDNLLVDTDFNIKTDLIHSRCGIGDYLDRLTLFSWQVLKNLESEGHYFINPLETIYNSSDKFKTTKILSKNGLKTPKTALIRDYADAKHFLDTKNMNYPVILKNSFSKCGMKVQKANSDDELKKLSKNSIWESKLIQEYVDFKNGDTYKDMRILVIDGEVVGGYRRVSNNFITNLYVGGQIEPLNVSSELEEIALKCSECMNGYIMGIDILPKDGEYYVVEVNTAPGTKGFRSLGIDVDKRIAECLIKYKKS</sequence>
<gene>
    <name type="primary">cofF</name>
    <name type="ordered locus">MMP0170</name>
</gene>
<accession>Q6M0U8</accession>
<evidence type="ECO:0000250" key="1"/>
<evidence type="ECO:0000255" key="2">
    <source>
        <dbReference type="PROSITE-ProRule" id="PRU00409"/>
    </source>
</evidence>
<evidence type="ECO:0000305" key="3"/>
<name>COFF_METMP</name>